<proteinExistence type="inferred from homology"/>
<sequence length="200" mass="22982">MARYTGPAWKLSRRLGISLSGTGKELEKRPYAPGPHGPNQRKKLSEYGLQLQEKQKLRHMYGMTERQFRRTFDQAGKMPGKHGENFMILLEARLDNLVYRMGLARTRRAARQLVNHGHITVDGSRVDIPSYRVKPGQTISVREKSNNLVVVKEAIEVNNFVPEYLTFDADKLEATYTRHAERAELPAEINEALIVEFYSR</sequence>
<evidence type="ECO:0000255" key="1">
    <source>
        <dbReference type="HAMAP-Rule" id="MF_01306"/>
    </source>
</evidence>
<evidence type="ECO:0000256" key="2">
    <source>
        <dbReference type="SAM" id="MobiDB-lite"/>
    </source>
</evidence>
<evidence type="ECO:0000305" key="3"/>
<gene>
    <name evidence="1" type="primary">rpsD</name>
    <name type="ordered locus">BCQ_4471</name>
</gene>
<dbReference type="EMBL" id="CP000227">
    <property type="protein sequence ID" value="ACM14897.1"/>
    <property type="molecule type" value="Genomic_DNA"/>
</dbReference>
<dbReference type="SMR" id="B9J159"/>
<dbReference type="KEGG" id="bcq:BCQ_4471"/>
<dbReference type="HOGENOM" id="CLU_092403_0_1_9"/>
<dbReference type="Proteomes" id="UP000000441">
    <property type="component" value="Chromosome"/>
</dbReference>
<dbReference type="GO" id="GO:0015935">
    <property type="term" value="C:small ribosomal subunit"/>
    <property type="evidence" value="ECO:0007669"/>
    <property type="project" value="InterPro"/>
</dbReference>
<dbReference type="GO" id="GO:0019843">
    <property type="term" value="F:rRNA binding"/>
    <property type="evidence" value="ECO:0007669"/>
    <property type="project" value="UniProtKB-UniRule"/>
</dbReference>
<dbReference type="GO" id="GO:0003735">
    <property type="term" value="F:structural constituent of ribosome"/>
    <property type="evidence" value="ECO:0007669"/>
    <property type="project" value="InterPro"/>
</dbReference>
<dbReference type="GO" id="GO:0042274">
    <property type="term" value="P:ribosomal small subunit biogenesis"/>
    <property type="evidence" value="ECO:0007669"/>
    <property type="project" value="TreeGrafter"/>
</dbReference>
<dbReference type="GO" id="GO:0006412">
    <property type="term" value="P:translation"/>
    <property type="evidence" value="ECO:0007669"/>
    <property type="project" value="UniProtKB-UniRule"/>
</dbReference>
<dbReference type="CDD" id="cd00165">
    <property type="entry name" value="S4"/>
    <property type="match status" value="1"/>
</dbReference>
<dbReference type="FunFam" id="1.10.1050.10:FF:000001">
    <property type="entry name" value="30S ribosomal protein S4"/>
    <property type="match status" value="1"/>
</dbReference>
<dbReference type="FunFam" id="3.10.290.10:FF:000001">
    <property type="entry name" value="30S ribosomal protein S4"/>
    <property type="match status" value="1"/>
</dbReference>
<dbReference type="Gene3D" id="1.10.1050.10">
    <property type="entry name" value="Ribosomal Protein S4 Delta 41, Chain A, domain 1"/>
    <property type="match status" value="1"/>
</dbReference>
<dbReference type="Gene3D" id="3.10.290.10">
    <property type="entry name" value="RNA-binding S4 domain"/>
    <property type="match status" value="1"/>
</dbReference>
<dbReference type="HAMAP" id="MF_01306_B">
    <property type="entry name" value="Ribosomal_uS4_B"/>
    <property type="match status" value="1"/>
</dbReference>
<dbReference type="InterPro" id="IPR022801">
    <property type="entry name" value="Ribosomal_uS4"/>
</dbReference>
<dbReference type="InterPro" id="IPR005709">
    <property type="entry name" value="Ribosomal_uS4_bac-type"/>
</dbReference>
<dbReference type="InterPro" id="IPR018079">
    <property type="entry name" value="Ribosomal_uS4_CS"/>
</dbReference>
<dbReference type="InterPro" id="IPR001912">
    <property type="entry name" value="Ribosomal_uS4_N"/>
</dbReference>
<dbReference type="InterPro" id="IPR002942">
    <property type="entry name" value="S4_RNA-bd"/>
</dbReference>
<dbReference type="InterPro" id="IPR036986">
    <property type="entry name" value="S4_RNA-bd_sf"/>
</dbReference>
<dbReference type="NCBIfam" id="NF003717">
    <property type="entry name" value="PRK05327.1"/>
    <property type="match status" value="1"/>
</dbReference>
<dbReference type="NCBIfam" id="TIGR01017">
    <property type="entry name" value="rpsD_bact"/>
    <property type="match status" value="1"/>
</dbReference>
<dbReference type="PANTHER" id="PTHR11831">
    <property type="entry name" value="30S 40S RIBOSOMAL PROTEIN"/>
    <property type="match status" value="1"/>
</dbReference>
<dbReference type="PANTHER" id="PTHR11831:SF4">
    <property type="entry name" value="SMALL RIBOSOMAL SUBUNIT PROTEIN US4M"/>
    <property type="match status" value="1"/>
</dbReference>
<dbReference type="Pfam" id="PF00163">
    <property type="entry name" value="Ribosomal_S4"/>
    <property type="match status" value="1"/>
</dbReference>
<dbReference type="Pfam" id="PF01479">
    <property type="entry name" value="S4"/>
    <property type="match status" value="1"/>
</dbReference>
<dbReference type="SMART" id="SM01390">
    <property type="entry name" value="Ribosomal_S4"/>
    <property type="match status" value="1"/>
</dbReference>
<dbReference type="SMART" id="SM00363">
    <property type="entry name" value="S4"/>
    <property type="match status" value="1"/>
</dbReference>
<dbReference type="SUPFAM" id="SSF55174">
    <property type="entry name" value="Alpha-L RNA-binding motif"/>
    <property type="match status" value="1"/>
</dbReference>
<dbReference type="PROSITE" id="PS00632">
    <property type="entry name" value="RIBOSOMAL_S4"/>
    <property type="match status" value="1"/>
</dbReference>
<dbReference type="PROSITE" id="PS50889">
    <property type="entry name" value="S4"/>
    <property type="match status" value="1"/>
</dbReference>
<name>RS4_BACCQ</name>
<organism>
    <name type="scientific">Bacillus cereus (strain Q1)</name>
    <dbReference type="NCBI Taxonomy" id="361100"/>
    <lineage>
        <taxon>Bacteria</taxon>
        <taxon>Bacillati</taxon>
        <taxon>Bacillota</taxon>
        <taxon>Bacilli</taxon>
        <taxon>Bacillales</taxon>
        <taxon>Bacillaceae</taxon>
        <taxon>Bacillus</taxon>
        <taxon>Bacillus cereus group</taxon>
    </lineage>
</organism>
<keyword id="KW-0687">Ribonucleoprotein</keyword>
<keyword id="KW-0689">Ribosomal protein</keyword>
<keyword id="KW-0694">RNA-binding</keyword>
<keyword id="KW-0699">rRNA-binding</keyword>
<comment type="function">
    <text evidence="1">One of the primary rRNA binding proteins, it binds directly to 16S rRNA where it nucleates assembly of the body of the 30S subunit.</text>
</comment>
<comment type="function">
    <text evidence="1">With S5 and S12 plays an important role in translational accuracy.</text>
</comment>
<comment type="subunit">
    <text evidence="1">Part of the 30S ribosomal subunit. Contacts protein S5. The interaction surface between S4 and S5 is involved in control of translational fidelity.</text>
</comment>
<comment type="similarity">
    <text evidence="1">Belongs to the universal ribosomal protein uS4 family.</text>
</comment>
<reference key="1">
    <citation type="journal article" date="2009" name="J. Bacteriol.">
        <title>Complete genome sequence of the extremophilic Bacillus cereus strain Q1 with industrial applications.</title>
        <authorList>
            <person name="Xiong Z."/>
            <person name="Jiang Y."/>
            <person name="Qi D."/>
            <person name="Lu H."/>
            <person name="Yang F."/>
            <person name="Yang J."/>
            <person name="Chen L."/>
            <person name="Sun L."/>
            <person name="Xu X."/>
            <person name="Xue Y."/>
            <person name="Zhu Y."/>
            <person name="Jin Q."/>
        </authorList>
    </citation>
    <scope>NUCLEOTIDE SEQUENCE [LARGE SCALE GENOMIC DNA]</scope>
    <source>
        <strain>Q1</strain>
    </source>
</reference>
<accession>B9J159</accession>
<feature type="chain" id="PRO_1000165383" description="Small ribosomal subunit protein uS4">
    <location>
        <begin position="1"/>
        <end position="200"/>
    </location>
</feature>
<feature type="domain" description="S4 RNA-binding" evidence="1">
    <location>
        <begin position="92"/>
        <end position="152"/>
    </location>
</feature>
<feature type="region of interest" description="Disordered" evidence="2">
    <location>
        <begin position="22"/>
        <end position="42"/>
    </location>
</feature>
<protein>
    <recommendedName>
        <fullName evidence="1">Small ribosomal subunit protein uS4</fullName>
    </recommendedName>
    <alternativeName>
        <fullName evidence="3">30S ribosomal protein S4</fullName>
    </alternativeName>
</protein>